<keyword id="KW-0665">Pyrimidine biosynthesis</keyword>
<keyword id="KW-0808">Transferase</keyword>
<reference key="1">
    <citation type="journal article" date="2007" name="PLoS ONE">
        <title>Analysis of the neurotoxin complex genes in Clostridium botulinum A1-A4 and B1 strains: BoNT/A3, /Ba4 and /B1 clusters are located within plasmids.</title>
        <authorList>
            <person name="Smith T.J."/>
            <person name="Hill K.K."/>
            <person name="Foley B.T."/>
            <person name="Detter J.C."/>
            <person name="Munk A.C."/>
            <person name="Bruce D.C."/>
            <person name="Doggett N.A."/>
            <person name="Smith L.A."/>
            <person name="Marks J.D."/>
            <person name="Xie G."/>
            <person name="Brettin T.S."/>
        </authorList>
    </citation>
    <scope>NUCLEOTIDE SEQUENCE [LARGE SCALE GENOMIC DNA]</scope>
    <source>
        <strain>Loch Maree / Type A3</strain>
    </source>
</reference>
<organism>
    <name type="scientific">Clostridium botulinum (strain Loch Maree / Type A3)</name>
    <dbReference type="NCBI Taxonomy" id="498214"/>
    <lineage>
        <taxon>Bacteria</taxon>
        <taxon>Bacillati</taxon>
        <taxon>Bacillota</taxon>
        <taxon>Clostridia</taxon>
        <taxon>Eubacteriales</taxon>
        <taxon>Clostridiaceae</taxon>
        <taxon>Clostridium</taxon>
    </lineage>
</organism>
<accession>B1L1E7</accession>
<proteinExistence type="inferred from homology"/>
<comment type="function">
    <text evidence="1">Catalyzes the condensation of carbamoyl phosphate and aspartate to form carbamoyl aspartate and inorganic phosphate, the committed step in the de novo pyrimidine nucleotide biosynthesis pathway.</text>
</comment>
<comment type="catalytic activity">
    <reaction evidence="1">
        <text>carbamoyl phosphate + L-aspartate = N-carbamoyl-L-aspartate + phosphate + H(+)</text>
        <dbReference type="Rhea" id="RHEA:20013"/>
        <dbReference type="ChEBI" id="CHEBI:15378"/>
        <dbReference type="ChEBI" id="CHEBI:29991"/>
        <dbReference type="ChEBI" id="CHEBI:32814"/>
        <dbReference type="ChEBI" id="CHEBI:43474"/>
        <dbReference type="ChEBI" id="CHEBI:58228"/>
        <dbReference type="EC" id="2.1.3.2"/>
    </reaction>
</comment>
<comment type="pathway">
    <text evidence="1">Pyrimidine metabolism; UMP biosynthesis via de novo pathway; (S)-dihydroorotate from bicarbonate: step 2/3.</text>
</comment>
<comment type="subunit">
    <text evidence="1">Heterododecamer (2C3:3R2) of six catalytic PyrB chains organized as two trimers (C3), and six regulatory PyrI chains organized as three dimers (R2).</text>
</comment>
<comment type="similarity">
    <text evidence="1">Belongs to the aspartate/ornithine carbamoyltransferase superfamily. ATCase family.</text>
</comment>
<feature type="chain" id="PRO_1000088752" description="Aspartate carbamoyltransferase catalytic subunit">
    <location>
        <begin position="1"/>
        <end position="307"/>
    </location>
</feature>
<feature type="binding site" evidence="1">
    <location>
        <position position="54"/>
    </location>
    <ligand>
        <name>carbamoyl phosphate</name>
        <dbReference type="ChEBI" id="CHEBI:58228"/>
    </ligand>
</feature>
<feature type="binding site" evidence="1">
    <location>
        <position position="55"/>
    </location>
    <ligand>
        <name>carbamoyl phosphate</name>
        <dbReference type="ChEBI" id="CHEBI:58228"/>
    </ligand>
</feature>
<feature type="binding site" evidence="1">
    <location>
        <position position="83"/>
    </location>
    <ligand>
        <name>L-aspartate</name>
        <dbReference type="ChEBI" id="CHEBI:29991"/>
    </ligand>
</feature>
<feature type="binding site" evidence="1">
    <location>
        <position position="104"/>
    </location>
    <ligand>
        <name>carbamoyl phosphate</name>
        <dbReference type="ChEBI" id="CHEBI:58228"/>
    </ligand>
</feature>
<feature type="binding site" evidence="1">
    <location>
        <position position="132"/>
    </location>
    <ligand>
        <name>carbamoyl phosphate</name>
        <dbReference type="ChEBI" id="CHEBI:58228"/>
    </ligand>
</feature>
<feature type="binding site" evidence="1">
    <location>
        <position position="135"/>
    </location>
    <ligand>
        <name>carbamoyl phosphate</name>
        <dbReference type="ChEBI" id="CHEBI:58228"/>
    </ligand>
</feature>
<feature type="binding site" evidence="1">
    <location>
        <position position="165"/>
    </location>
    <ligand>
        <name>L-aspartate</name>
        <dbReference type="ChEBI" id="CHEBI:29991"/>
    </ligand>
</feature>
<feature type="binding site" evidence="1">
    <location>
        <position position="228"/>
    </location>
    <ligand>
        <name>L-aspartate</name>
        <dbReference type="ChEBI" id="CHEBI:29991"/>
    </ligand>
</feature>
<feature type="binding site" evidence="1">
    <location>
        <position position="267"/>
    </location>
    <ligand>
        <name>carbamoyl phosphate</name>
        <dbReference type="ChEBI" id="CHEBI:58228"/>
    </ligand>
</feature>
<feature type="binding site" evidence="1">
    <location>
        <position position="268"/>
    </location>
    <ligand>
        <name>carbamoyl phosphate</name>
        <dbReference type="ChEBI" id="CHEBI:58228"/>
    </ligand>
</feature>
<sequence>MLKGRNLLDPMDFSLEELEGVFKLADEIIESPEKFLHVCDGKILATLFYEPSTRTRFSFEAAMLRLGGQVIGFSEPNSSSVAKGESVADTIRTVGCYADIAAMRHPKEGAPAIAAMYSEIPVINAGDGSHQHPTQTLTDLLTIRSLKGDLSNLTIGCCGDLKFGRTVHSLVKALSRYKNNKFVFMSPEELKIPDYIRKEILEKNNIEYKEVSKMEDAMAELDILYMTRVQRERFFNEDDYVRLKDSYILDGEKMKYAKKDMMVLHPLPRVNEIAYEIDQDPRGCYFKQAKYGMYVRMALIAKLLGVR</sequence>
<name>PYRB_CLOBM</name>
<dbReference type="EC" id="2.1.3.2" evidence="1"/>
<dbReference type="EMBL" id="CP000962">
    <property type="protein sequence ID" value="ACA55457.1"/>
    <property type="molecule type" value="Genomic_DNA"/>
</dbReference>
<dbReference type="RefSeq" id="WP_012343434.1">
    <property type="nucleotide sequence ID" value="NC_010520.1"/>
</dbReference>
<dbReference type="SMR" id="B1L1E7"/>
<dbReference type="KEGG" id="cbl:CLK_2639"/>
<dbReference type="HOGENOM" id="CLU_043846_1_2_9"/>
<dbReference type="UniPathway" id="UPA00070">
    <property type="reaction ID" value="UER00116"/>
</dbReference>
<dbReference type="GO" id="GO:0016597">
    <property type="term" value="F:amino acid binding"/>
    <property type="evidence" value="ECO:0007669"/>
    <property type="project" value="InterPro"/>
</dbReference>
<dbReference type="GO" id="GO:0004070">
    <property type="term" value="F:aspartate carbamoyltransferase activity"/>
    <property type="evidence" value="ECO:0007669"/>
    <property type="project" value="UniProtKB-UniRule"/>
</dbReference>
<dbReference type="GO" id="GO:0006207">
    <property type="term" value="P:'de novo' pyrimidine nucleobase biosynthetic process"/>
    <property type="evidence" value="ECO:0007669"/>
    <property type="project" value="InterPro"/>
</dbReference>
<dbReference type="GO" id="GO:0044205">
    <property type="term" value="P:'de novo' UMP biosynthetic process"/>
    <property type="evidence" value="ECO:0007669"/>
    <property type="project" value="UniProtKB-UniRule"/>
</dbReference>
<dbReference type="GO" id="GO:0006520">
    <property type="term" value="P:amino acid metabolic process"/>
    <property type="evidence" value="ECO:0007669"/>
    <property type="project" value="InterPro"/>
</dbReference>
<dbReference type="FunFam" id="3.40.50.1370:FF:000002">
    <property type="entry name" value="Aspartate carbamoyltransferase 2"/>
    <property type="match status" value="1"/>
</dbReference>
<dbReference type="Gene3D" id="3.40.50.1370">
    <property type="entry name" value="Aspartate/ornithine carbamoyltransferase"/>
    <property type="match status" value="2"/>
</dbReference>
<dbReference type="HAMAP" id="MF_00001">
    <property type="entry name" value="Asp_carb_tr"/>
    <property type="match status" value="1"/>
</dbReference>
<dbReference type="InterPro" id="IPR006132">
    <property type="entry name" value="Asp/Orn_carbamoyltranf_P-bd"/>
</dbReference>
<dbReference type="InterPro" id="IPR006130">
    <property type="entry name" value="Asp/Orn_carbamoylTrfase"/>
</dbReference>
<dbReference type="InterPro" id="IPR036901">
    <property type="entry name" value="Asp/Orn_carbamoylTrfase_sf"/>
</dbReference>
<dbReference type="InterPro" id="IPR002082">
    <property type="entry name" value="Asp_carbamoyltransf"/>
</dbReference>
<dbReference type="InterPro" id="IPR006131">
    <property type="entry name" value="Asp_carbamoyltransf_Asp/Orn-bd"/>
</dbReference>
<dbReference type="NCBIfam" id="TIGR00670">
    <property type="entry name" value="asp_carb_tr"/>
    <property type="match status" value="1"/>
</dbReference>
<dbReference type="NCBIfam" id="NF002032">
    <property type="entry name" value="PRK00856.1"/>
    <property type="match status" value="1"/>
</dbReference>
<dbReference type="PANTHER" id="PTHR45753:SF6">
    <property type="entry name" value="ASPARTATE CARBAMOYLTRANSFERASE"/>
    <property type="match status" value="1"/>
</dbReference>
<dbReference type="PANTHER" id="PTHR45753">
    <property type="entry name" value="ORNITHINE CARBAMOYLTRANSFERASE, MITOCHONDRIAL"/>
    <property type="match status" value="1"/>
</dbReference>
<dbReference type="Pfam" id="PF00185">
    <property type="entry name" value="OTCace"/>
    <property type="match status" value="1"/>
</dbReference>
<dbReference type="Pfam" id="PF02729">
    <property type="entry name" value="OTCace_N"/>
    <property type="match status" value="1"/>
</dbReference>
<dbReference type="PRINTS" id="PR00100">
    <property type="entry name" value="AOTCASE"/>
</dbReference>
<dbReference type="PRINTS" id="PR00101">
    <property type="entry name" value="ATCASE"/>
</dbReference>
<dbReference type="SUPFAM" id="SSF53671">
    <property type="entry name" value="Aspartate/ornithine carbamoyltransferase"/>
    <property type="match status" value="1"/>
</dbReference>
<dbReference type="PROSITE" id="PS00097">
    <property type="entry name" value="CARBAMOYLTRANSFERASE"/>
    <property type="match status" value="1"/>
</dbReference>
<evidence type="ECO:0000255" key="1">
    <source>
        <dbReference type="HAMAP-Rule" id="MF_00001"/>
    </source>
</evidence>
<gene>
    <name evidence="1" type="primary">pyrB</name>
    <name type="ordered locus">CLK_2639</name>
</gene>
<protein>
    <recommendedName>
        <fullName evidence="1">Aspartate carbamoyltransferase catalytic subunit</fullName>
        <ecNumber evidence="1">2.1.3.2</ecNumber>
    </recommendedName>
    <alternativeName>
        <fullName evidence="1">Aspartate transcarbamylase</fullName>
        <shortName evidence="1">ATCase</shortName>
    </alternativeName>
</protein>